<reference key="1">
    <citation type="submission" date="2007-11" db="EMBL/GenBank/DDBJ databases">
        <authorList>
            <consortium name="The Salmonella enterica serovar Arizonae Genome Sequencing Project"/>
            <person name="McClelland M."/>
            <person name="Sanderson E.K."/>
            <person name="Porwollik S."/>
            <person name="Spieth J."/>
            <person name="Clifton W.S."/>
            <person name="Fulton R."/>
            <person name="Chunyan W."/>
            <person name="Wollam A."/>
            <person name="Shah N."/>
            <person name="Pepin K."/>
            <person name="Bhonagiri V."/>
            <person name="Nash W."/>
            <person name="Johnson M."/>
            <person name="Thiruvilangam P."/>
            <person name="Wilson R."/>
        </authorList>
    </citation>
    <scope>NUCLEOTIDE SEQUENCE [LARGE SCALE GENOMIC DNA]</scope>
    <source>
        <strain>ATCC BAA-731 / CDC346-86 / RSK2980</strain>
    </source>
</reference>
<proteinExistence type="inferred from homology"/>
<feature type="chain" id="PRO_0000368740" description="ATP synthase subunit b">
    <location>
        <begin position="1"/>
        <end position="156"/>
    </location>
</feature>
<feature type="transmembrane region" description="Helical" evidence="1">
    <location>
        <begin position="11"/>
        <end position="31"/>
    </location>
</feature>
<protein>
    <recommendedName>
        <fullName evidence="1">ATP synthase subunit b</fullName>
    </recommendedName>
    <alternativeName>
        <fullName evidence="1">ATP synthase F(0) sector subunit b</fullName>
    </alternativeName>
    <alternativeName>
        <fullName evidence="1">ATPase subunit I</fullName>
    </alternativeName>
    <alternativeName>
        <fullName evidence="1">F-type ATPase subunit b</fullName>
        <shortName evidence="1">F-ATPase subunit b</shortName>
    </alternativeName>
</protein>
<evidence type="ECO:0000255" key="1">
    <source>
        <dbReference type="HAMAP-Rule" id="MF_01398"/>
    </source>
</evidence>
<dbReference type="EMBL" id="CP000880">
    <property type="protein sequence ID" value="ABX23576.1"/>
    <property type="molecule type" value="Genomic_DNA"/>
</dbReference>
<dbReference type="BMRB" id="A9MJR5"/>
<dbReference type="SMR" id="A9MJR5"/>
<dbReference type="STRING" id="41514.SARI_03782"/>
<dbReference type="KEGG" id="ses:SARI_03782"/>
<dbReference type="HOGENOM" id="CLU_079215_4_5_6"/>
<dbReference type="Proteomes" id="UP000002084">
    <property type="component" value="Chromosome"/>
</dbReference>
<dbReference type="GO" id="GO:0005886">
    <property type="term" value="C:plasma membrane"/>
    <property type="evidence" value="ECO:0007669"/>
    <property type="project" value="UniProtKB-SubCell"/>
</dbReference>
<dbReference type="GO" id="GO:0045259">
    <property type="term" value="C:proton-transporting ATP synthase complex"/>
    <property type="evidence" value="ECO:0007669"/>
    <property type="project" value="UniProtKB-KW"/>
</dbReference>
<dbReference type="GO" id="GO:0046933">
    <property type="term" value="F:proton-transporting ATP synthase activity, rotational mechanism"/>
    <property type="evidence" value="ECO:0007669"/>
    <property type="project" value="UniProtKB-UniRule"/>
</dbReference>
<dbReference type="GO" id="GO:0046961">
    <property type="term" value="F:proton-transporting ATPase activity, rotational mechanism"/>
    <property type="evidence" value="ECO:0007669"/>
    <property type="project" value="TreeGrafter"/>
</dbReference>
<dbReference type="CDD" id="cd06503">
    <property type="entry name" value="ATP-synt_Fo_b"/>
    <property type="match status" value="1"/>
</dbReference>
<dbReference type="FunFam" id="1.20.5.620:FF:000001">
    <property type="entry name" value="ATP synthase subunit b"/>
    <property type="match status" value="1"/>
</dbReference>
<dbReference type="Gene3D" id="1.20.5.620">
    <property type="entry name" value="F1F0 ATP synthase subunit B, membrane domain"/>
    <property type="match status" value="1"/>
</dbReference>
<dbReference type="HAMAP" id="MF_01398">
    <property type="entry name" value="ATP_synth_b_bprime"/>
    <property type="match status" value="1"/>
</dbReference>
<dbReference type="InterPro" id="IPR028987">
    <property type="entry name" value="ATP_synth_B-like_membr_sf"/>
</dbReference>
<dbReference type="InterPro" id="IPR002146">
    <property type="entry name" value="ATP_synth_b/b'su_bac/chlpt"/>
</dbReference>
<dbReference type="InterPro" id="IPR005864">
    <property type="entry name" value="ATP_synth_F0_bsu_bac"/>
</dbReference>
<dbReference type="InterPro" id="IPR050059">
    <property type="entry name" value="ATP_synthase_B_chain"/>
</dbReference>
<dbReference type="NCBIfam" id="TIGR01144">
    <property type="entry name" value="ATP_synt_b"/>
    <property type="match status" value="1"/>
</dbReference>
<dbReference type="NCBIfam" id="NF004411">
    <property type="entry name" value="PRK05759.1-2"/>
    <property type="match status" value="1"/>
</dbReference>
<dbReference type="NCBIfam" id="NF004413">
    <property type="entry name" value="PRK05759.1-4"/>
    <property type="match status" value="1"/>
</dbReference>
<dbReference type="PANTHER" id="PTHR33445:SF1">
    <property type="entry name" value="ATP SYNTHASE SUBUNIT B"/>
    <property type="match status" value="1"/>
</dbReference>
<dbReference type="PANTHER" id="PTHR33445">
    <property type="entry name" value="ATP SYNTHASE SUBUNIT B', CHLOROPLASTIC"/>
    <property type="match status" value="1"/>
</dbReference>
<dbReference type="Pfam" id="PF00430">
    <property type="entry name" value="ATP-synt_B"/>
    <property type="match status" value="1"/>
</dbReference>
<dbReference type="SUPFAM" id="SSF81573">
    <property type="entry name" value="F1F0 ATP synthase subunit B, membrane domain"/>
    <property type="match status" value="1"/>
</dbReference>
<accession>A9MJR5</accession>
<comment type="function">
    <text evidence="1">F(1)F(0) ATP synthase produces ATP from ADP in the presence of a proton or sodium gradient. F-type ATPases consist of two structural domains, F(1) containing the extramembraneous catalytic core and F(0) containing the membrane proton channel, linked together by a central stalk and a peripheral stalk. During catalysis, ATP synthesis in the catalytic domain of F(1) is coupled via a rotary mechanism of the central stalk subunits to proton translocation.</text>
</comment>
<comment type="function">
    <text evidence="1">Component of the F(0) channel, it forms part of the peripheral stalk, linking F(1) to F(0).</text>
</comment>
<comment type="subunit">
    <text evidence="1">F-type ATPases have 2 components, F(1) - the catalytic core - and F(0) - the membrane proton channel. F(1) has five subunits: alpha(3), beta(3), gamma(1), delta(1), epsilon(1). F(0) has three main subunits: a(1), b(2) and c(10-14). The alpha and beta chains form an alternating ring which encloses part of the gamma chain. F(1) is attached to F(0) by a central stalk formed by the gamma and epsilon chains, while a peripheral stalk is formed by the delta and b chains.</text>
</comment>
<comment type="subcellular location">
    <subcellularLocation>
        <location evidence="1">Cell inner membrane</location>
        <topology evidence="1">Single-pass membrane protein</topology>
    </subcellularLocation>
</comment>
<comment type="similarity">
    <text evidence="1">Belongs to the ATPase B chain family.</text>
</comment>
<keyword id="KW-0066">ATP synthesis</keyword>
<keyword id="KW-0997">Cell inner membrane</keyword>
<keyword id="KW-1003">Cell membrane</keyword>
<keyword id="KW-0138">CF(0)</keyword>
<keyword id="KW-0375">Hydrogen ion transport</keyword>
<keyword id="KW-0406">Ion transport</keyword>
<keyword id="KW-0472">Membrane</keyword>
<keyword id="KW-1185">Reference proteome</keyword>
<keyword id="KW-0812">Transmembrane</keyword>
<keyword id="KW-1133">Transmembrane helix</keyword>
<keyword id="KW-0813">Transport</keyword>
<sequence length="156" mass="17365">MNLNATILGQAIAFILFVWFCMKYVWPPLMAAIEKRQKEIADGLASAERAHKDLDLAKASATDQLKKAKAEAQVIIEQANKRRAQILDEAKTEAEQERTKIVAQAQAEIEAERKRAREELRKQVAILAVAGAEKIIERSVDEAANSDIVDKLVAEL</sequence>
<organism>
    <name type="scientific">Salmonella arizonae (strain ATCC BAA-731 / CDC346-86 / RSK2980)</name>
    <dbReference type="NCBI Taxonomy" id="41514"/>
    <lineage>
        <taxon>Bacteria</taxon>
        <taxon>Pseudomonadati</taxon>
        <taxon>Pseudomonadota</taxon>
        <taxon>Gammaproteobacteria</taxon>
        <taxon>Enterobacterales</taxon>
        <taxon>Enterobacteriaceae</taxon>
        <taxon>Salmonella</taxon>
    </lineage>
</organism>
<name>ATPF_SALAR</name>
<gene>
    <name evidence="1" type="primary">atpF</name>
    <name type="ordered locus">SARI_03782</name>
</gene>